<comment type="function">
    <text evidence="1">This is one of the proteins that bind and probably mediate the attachment of the 5S RNA into the large ribosomal subunit, where it forms part of the central protuberance.</text>
</comment>
<comment type="subunit">
    <text evidence="1">Part of the 50S ribosomal subunit; part of the 5S rRNA/L5/L18/L25 subcomplex. Contacts the 5S and 23S rRNAs.</text>
</comment>
<comment type="similarity">
    <text evidence="1">Belongs to the universal ribosomal protein uL18 family.</text>
</comment>
<name>RL18_XANE5</name>
<proteinExistence type="inferred from homology"/>
<evidence type="ECO:0000255" key="1">
    <source>
        <dbReference type="HAMAP-Rule" id="MF_01337"/>
    </source>
</evidence>
<evidence type="ECO:0000305" key="2"/>
<dbReference type="EMBL" id="AM039952">
    <property type="protein sequence ID" value="CAJ22646.1"/>
    <property type="molecule type" value="Genomic_DNA"/>
</dbReference>
<dbReference type="RefSeq" id="WP_003486684.1">
    <property type="nucleotide sequence ID" value="NZ_CP017190.1"/>
</dbReference>
<dbReference type="SMR" id="Q3BWW7"/>
<dbReference type="STRING" id="456327.BJD11_17660"/>
<dbReference type="GeneID" id="97509352"/>
<dbReference type="KEGG" id="xcv:XCV1015"/>
<dbReference type="eggNOG" id="COG0256">
    <property type="taxonomic scope" value="Bacteria"/>
</dbReference>
<dbReference type="HOGENOM" id="CLU_098841_0_1_6"/>
<dbReference type="Proteomes" id="UP000007069">
    <property type="component" value="Chromosome"/>
</dbReference>
<dbReference type="GO" id="GO:0022625">
    <property type="term" value="C:cytosolic large ribosomal subunit"/>
    <property type="evidence" value="ECO:0007669"/>
    <property type="project" value="TreeGrafter"/>
</dbReference>
<dbReference type="GO" id="GO:0008097">
    <property type="term" value="F:5S rRNA binding"/>
    <property type="evidence" value="ECO:0007669"/>
    <property type="project" value="TreeGrafter"/>
</dbReference>
<dbReference type="GO" id="GO:0003735">
    <property type="term" value="F:structural constituent of ribosome"/>
    <property type="evidence" value="ECO:0007669"/>
    <property type="project" value="InterPro"/>
</dbReference>
<dbReference type="GO" id="GO:0006412">
    <property type="term" value="P:translation"/>
    <property type="evidence" value="ECO:0007669"/>
    <property type="project" value="UniProtKB-UniRule"/>
</dbReference>
<dbReference type="CDD" id="cd00432">
    <property type="entry name" value="Ribosomal_L18_L5e"/>
    <property type="match status" value="1"/>
</dbReference>
<dbReference type="FunFam" id="3.30.420.100:FF:000001">
    <property type="entry name" value="50S ribosomal protein L18"/>
    <property type="match status" value="1"/>
</dbReference>
<dbReference type="Gene3D" id="3.30.420.100">
    <property type="match status" value="1"/>
</dbReference>
<dbReference type="HAMAP" id="MF_01337_B">
    <property type="entry name" value="Ribosomal_uL18_B"/>
    <property type="match status" value="1"/>
</dbReference>
<dbReference type="InterPro" id="IPR004389">
    <property type="entry name" value="Ribosomal_uL18_bac-type"/>
</dbReference>
<dbReference type="InterPro" id="IPR005484">
    <property type="entry name" value="Ribosomal_uL18_bac/euk"/>
</dbReference>
<dbReference type="NCBIfam" id="TIGR00060">
    <property type="entry name" value="L18_bact"/>
    <property type="match status" value="1"/>
</dbReference>
<dbReference type="PANTHER" id="PTHR12899">
    <property type="entry name" value="39S RIBOSOMAL PROTEIN L18, MITOCHONDRIAL"/>
    <property type="match status" value="1"/>
</dbReference>
<dbReference type="PANTHER" id="PTHR12899:SF3">
    <property type="entry name" value="LARGE RIBOSOMAL SUBUNIT PROTEIN UL18M"/>
    <property type="match status" value="1"/>
</dbReference>
<dbReference type="Pfam" id="PF00861">
    <property type="entry name" value="Ribosomal_L18p"/>
    <property type="match status" value="1"/>
</dbReference>
<dbReference type="SUPFAM" id="SSF53137">
    <property type="entry name" value="Translational machinery components"/>
    <property type="match status" value="1"/>
</dbReference>
<gene>
    <name evidence="1" type="primary">rplR</name>
    <name type="ordered locus">XCV1015</name>
</gene>
<accession>Q3BWW7</accession>
<feature type="chain" id="PRO_0000251393" description="Large ribosomal subunit protein uL18">
    <location>
        <begin position="1"/>
        <end position="119"/>
    </location>
</feature>
<organism>
    <name type="scientific">Xanthomonas euvesicatoria pv. vesicatoria (strain 85-10)</name>
    <name type="common">Xanthomonas campestris pv. vesicatoria</name>
    <dbReference type="NCBI Taxonomy" id="316273"/>
    <lineage>
        <taxon>Bacteria</taxon>
        <taxon>Pseudomonadati</taxon>
        <taxon>Pseudomonadota</taxon>
        <taxon>Gammaproteobacteria</taxon>
        <taxon>Lysobacterales</taxon>
        <taxon>Lysobacteraceae</taxon>
        <taxon>Xanthomonas</taxon>
    </lineage>
</organism>
<keyword id="KW-0687">Ribonucleoprotein</keyword>
<keyword id="KW-0689">Ribosomal protein</keyword>
<keyword id="KW-0694">RNA-binding</keyword>
<keyword id="KW-0699">rRNA-binding</keyword>
<reference key="1">
    <citation type="journal article" date="2005" name="J. Bacteriol.">
        <title>Insights into genome plasticity and pathogenicity of the plant pathogenic Bacterium Xanthomonas campestris pv. vesicatoria revealed by the complete genome sequence.</title>
        <authorList>
            <person name="Thieme F."/>
            <person name="Koebnik R."/>
            <person name="Bekel T."/>
            <person name="Berger C."/>
            <person name="Boch J."/>
            <person name="Buettner D."/>
            <person name="Caldana C."/>
            <person name="Gaigalat L."/>
            <person name="Goesmann A."/>
            <person name="Kay S."/>
            <person name="Kirchner O."/>
            <person name="Lanz C."/>
            <person name="Linke B."/>
            <person name="McHardy A.C."/>
            <person name="Meyer F."/>
            <person name="Mittenhuber G."/>
            <person name="Nies D.H."/>
            <person name="Niesbach-Kloesgen U."/>
            <person name="Patschkowski T."/>
            <person name="Rueckert C."/>
            <person name="Rupp O."/>
            <person name="Schneiker S."/>
            <person name="Schuster S.C."/>
            <person name="Vorhoelter F.J."/>
            <person name="Weber E."/>
            <person name="Puehler A."/>
            <person name="Bonas U."/>
            <person name="Bartels D."/>
            <person name="Kaiser O."/>
        </authorList>
    </citation>
    <scope>NUCLEOTIDE SEQUENCE [LARGE SCALE GENOMIC DNA]</scope>
    <source>
        <strain>85-10</strain>
    </source>
</reference>
<sequence>MSINKNIARLRRAKSTRAHIRELGVARLSVLRTGQHLYAQVFTADGSKVIAAANTLQADVKDGLKNGKNSDAAAKVGKLIAERAKAAGIEKVAFDRSGYRYHGRIKALADAAREGGLQF</sequence>
<protein>
    <recommendedName>
        <fullName evidence="1">Large ribosomal subunit protein uL18</fullName>
    </recommendedName>
    <alternativeName>
        <fullName evidence="2">50S ribosomal protein L18</fullName>
    </alternativeName>
</protein>